<protein>
    <recommendedName>
        <fullName>Keratin-associated protein 10-12</fullName>
    </recommendedName>
    <alternativeName>
        <fullName>High sulfur keratin-associated protein 10.12</fullName>
    </alternativeName>
    <alternativeName>
        <fullName>Keratin-associated protein 10.12</fullName>
    </alternativeName>
    <alternativeName>
        <fullName>Keratin-associated protein 18-12</fullName>
    </alternativeName>
    <alternativeName>
        <fullName>Keratin-associated protein 18.12</fullName>
    </alternativeName>
</protein>
<sequence length="245" mass="25107">MSVCSSDLSYGSRVCLPGSCDSCSDSWQVDDCPESCCEPPCCAPAPCLSLVCTPVSRVSSPCCRVTCEPSPCQSGCTSSCTPSCCQQSSCQPACCTSSPCQQACCVPVCCKTVCCKPVCCMPVCCGPSSSCCQQSSCQPACCISSPCQQSCCVPVCCKPICCVPVCSGASSLCCQQSSCQPACCTTSCCRPSSSVSLLCRPVCRPARRVPVPSCCVPTSSCQPSCGRLASCGSLLCRPTCSRLAC</sequence>
<evidence type="ECO:0000269" key="1">
    <source>
    </source>
</evidence>
<evidence type="ECO:0000269" key="2">
    <source>
    </source>
</evidence>
<evidence type="ECO:0000305" key="3"/>
<name>KR10C_HUMAN</name>
<gene>
    <name type="primary">KRTAP10-12</name>
    <name type="synonym">KAP10.12</name>
    <name type="synonym">KAP18-12</name>
    <name type="synonym">KRTAP10.12</name>
    <name type="synonym">KRTAP18-12</name>
    <name type="synonym">KRTAP18.12</name>
</gene>
<feature type="chain" id="PRO_0000185220" description="Keratin-associated protein 10-12">
    <location>
        <begin position="1"/>
        <end position="245"/>
    </location>
</feature>
<feature type="repeat" description="1">
    <location>
        <begin position="36"/>
        <end position="40"/>
    </location>
</feature>
<feature type="repeat" description="2">
    <location>
        <begin position="41"/>
        <end position="45"/>
    </location>
</feature>
<feature type="repeat" description="3">
    <location>
        <begin position="62"/>
        <end position="66"/>
    </location>
</feature>
<feature type="repeat" description="4">
    <location>
        <begin position="84"/>
        <end position="88"/>
    </location>
</feature>
<feature type="repeat" description="5">
    <location>
        <begin position="94"/>
        <end position="98"/>
    </location>
</feature>
<feature type="repeat" description="6">
    <location>
        <begin position="104"/>
        <end position="108"/>
    </location>
</feature>
<feature type="repeat" description="7">
    <location>
        <begin position="109"/>
        <end position="113"/>
    </location>
</feature>
<feature type="repeat" description="8">
    <location>
        <begin position="114"/>
        <end position="118"/>
    </location>
</feature>
<feature type="repeat" description="9">
    <location>
        <begin position="119"/>
        <end position="123"/>
    </location>
</feature>
<feature type="repeat" description="10">
    <location>
        <begin position="124"/>
        <end position="128"/>
    </location>
</feature>
<feature type="repeat" description="11">
    <location>
        <begin position="131"/>
        <end position="135"/>
    </location>
</feature>
<feature type="repeat" description="12">
    <location>
        <begin position="141"/>
        <end position="145"/>
    </location>
</feature>
<feature type="repeat" description="13">
    <location>
        <begin position="151"/>
        <end position="155"/>
    </location>
</feature>
<feature type="repeat" description="14">
    <location>
        <begin position="156"/>
        <end position="160"/>
    </location>
</feature>
<feature type="repeat" description="15">
    <location>
        <begin position="161"/>
        <end position="165"/>
    </location>
</feature>
<feature type="repeat" description="16">
    <location>
        <begin position="173"/>
        <end position="177"/>
    </location>
</feature>
<feature type="repeat" description="17">
    <location>
        <begin position="183"/>
        <end position="187"/>
    </location>
</feature>
<feature type="repeat" description="18">
    <location>
        <begin position="188"/>
        <end position="192"/>
    </location>
</feature>
<feature type="repeat" description="19">
    <location>
        <begin position="214"/>
        <end position="218"/>
    </location>
</feature>
<feature type="region of interest" description="19 X 5 AA repeats of C-C-X(3)">
    <location>
        <begin position="36"/>
        <end position="218"/>
    </location>
</feature>
<feature type="sequence variant" id="VAR_053465" description="In dbSNP:rs35076450.">
    <original>P</original>
    <variation>Q</variation>
    <location>
        <position position="146"/>
    </location>
</feature>
<feature type="sequence variant" id="VAR_053466" description="In dbSNP:rs34302939.">
    <original>G</original>
    <variation>S</variation>
    <location>
        <position position="226"/>
    </location>
</feature>
<organism>
    <name type="scientific">Homo sapiens</name>
    <name type="common">Human</name>
    <dbReference type="NCBI Taxonomy" id="9606"/>
    <lineage>
        <taxon>Eukaryota</taxon>
        <taxon>Metazoa</taxon>
        <taxon>Chordata</taxon>
        <taxon>Craniata</taxon>
        <taxon>Vertebrata</taxon>
        <taxon>Euteleostomi</taxon>
        <taxon>Mammalia</taxon>
        <taxon>Eutheria</taxon>
        <taxon>Euarchontoglires</taxon>
        <taxon>Primates</taxon>
        <taxon>Haplorrhini</taxon>
        <taxon>Catarrhini</taxon>
        <taxon>Hominidae</taxon>
        <taxon>Homo</taxon>
    </lineage>
</organism>
<accession>P60413</accession>
<accession>B2RPA3</accession>
<proteinExistence type="evidence at protein level"/>
<keyword id="KW-0416">Keratin</keyword>
<keyword id="KW-1267">Proteomics identification</keyword>
<keyword id="KW-1185">Reference proteome</keyword>
<keyword id="KW-0677">Repeat</keyword>
<reference key="1">
    <citation type="journal article" date="2004" name="Genomics">
        <title>A cluster of 21 keratin-associated protein genes within introns of another gene on human chromosome 21q22.3.</title>
        <authorList>
            <person name="Shibuya K."/>
            <person name="Obayashi I."/>
            <person name="Asakawa S."/>
            <person name="Minoshima S."/>
            <person name="Kudoh J."/>
            <person name="Shimizu N."/>
        </authorList>
    </citation>
    <scope>NUCLEOTIDE SEQUENCE [MRNA]</scope>
    <scope>TISSUE SPECIFICITY</scope>
    <source>
        <tissue>Hair root</tissue>
    </source>
</reference>
<reference key="2">
    <citation type="journal article" date="2000" name="Nature">
        <title>The DNA sequence of human chromosome 21.</title>
        <authorList>
            <person name="Hattori M."/>
            <person name="Fujiyama A."/>
            <person name="Taylor T.D."/>
            <person name="Watanabe H."/>
            <person name="Yada T."/>
            <person name="Park H.-S."/>
            <person name="Toyoda A."/>
            <person name="Ishii K."/>
            <person name="Totoki Y."/>
            <person name="Choi D.-K."/>
            <person name="Groner Y."/>
            <person name="Soeda E."/>
            <person name="Ohki M."/>
            <person name="Takagi T."/>
            <person name="Sakaki Y."/>
            <person name="Taudien S."/>
            <person name="Blechschmidt K."/>
            <person name="Polley A."/>
            <person name="Menzel U."/>
            <person name="Delabar J."/>
            <person name="Kumpf K."/>
            <person name="Lehmann R."/>
            <person name="Patterson D."/>
            <person name="Reichwald K."/>
            <person name="Rump A."/>
            <person name="Schillhabel M."/>
            <person name="Schudy A."/>
            <person name="Zimmermann W."/>
            <person name="Rosenthal A."/>
            <person name="Kudoh J."/>
            <person name="Shibuya K."/>
            <person name="Kawasaki K."/>
            <person name="Asakawa S."/>
            <person name="Shintani A."/>
            <person name="Sasaki T."/>
            <person name="Nagamine K."/>
            <person name="Mitsuyama S."/>
            <person name="Antonarakis S.E."/>
            <person name="Minoshima S."/>
            <person name="Shimizu N."/>
            <person name="Nordsiek G."/>
            <person name="Hornischer K."/>
            <person name="Brandt P."/>
            <person name="Scharfe M."/>
            <person name="Schoen O."/>
            <person name="Desario A."/>
            <person name="Reichelt J."/>
            <person name="Kauer G."/>
            <person name="Bloecker H."/>
            <person name="Ramser J."/>
            <person name="Beck A."/>
            <person name="Klages S."/>
            <person name="Hennig S."/>
            <person name="Riesselmann L."/>
            <person name="Dagand E."/>
            <person name="Wehrmeyer S."/>
            <person name="Borzym K."/>
            <person name="Gardiner K."/>
            <person name="Nizetic D."/>
            <person name="Francis F."/>
            <person name="Lehrach H."/>
            <person name="Reinhardt R."/>
            <person name="Yaspo M.-L."/>
        </authorList>
    </citation>
    <scope>NUCLEOTIDE SEQUENCE [LARGE SCALE GENOMIC DNA]</scope>
</reference>
<reference key="3">
    <citation type="submission" date="2005-09" db="EMBL/GenBank/DDBJ databases">
        <authorList>
            <person name="Mural R.J."/>
            <person name="Istrail S."/>
            <person name="Sutton G.G."/>
            <person name="Florea L."/>
            <person name="Halpern A.L."/>
            <person name="Mobarry C.M."/>
            <person name="Lippert R."/>
            <person name="Walenz B."/>
            <person name="Shatkay H."/>
            <person name="Dew I."/>
            <person name="Miller J.R."/>
            <person name="Flanigan M.J."/>
            <person name="Edwards N.J."/>
            <person name="Bolanos R."/>
            <person name="Fasulo D."/>
            <person name="Halldorsson B.V."/>
            <person name="Hannenhalli S."/>
            <person name="Turner R."/>
            <person name="Yooseph S."/>
            <person name="Lu F."/>
            <person name="Nusskern D.R."/>
            <person name="Shue B.C."/>
            <person name="Zheng X.H."/>
            <person name="Zhong F."/>
            <person name="Delcher A.L."/>
            <person name="Huson D.H."/>
            <person name="Kravitz S.A."/>
            <person name="Mouchard L."/>
            <person name="Reinert K."/>
            <person name="Remington K.A."/>
            <person name="Clark A.G."/>
            <person name="Waterman M.S."/>
            <person name="Eichler E.E."/>
            <person name="Adams M.D."/>
            <person name="Hunkapiller M.W."/>
            <person name="Myers E.W."/>
            <person name="Venter J.C."/>
        </authorList>
    </citation>
    <scope>NUCLEOTIDE SEQUENCE [LARGE SCALE GENOMIC DNA]</scope>
</reference>
<reference key="4">
    <citation type="journal article" date="2004" name="Genome Res.">
        <title>The status, quality, and expansion of the NIH full-length cDNA project: the Mammalian Gene Collection (MGC).</title>
        <authorList>
            <consortium name="The MGC Project Team"/>
        </authorList>
    </citation>
    <scope>NUCLEOTIDE SEQUENCE [LARGE SCALE MRNA]</scope>
</reference>
<reference key="5">
    <citation type="journal article" date="2004" name="J. Invest. Dermatol.">
        <title>Hair keratin associated proteins: characterization of a second high sulfur KAP gene domain on human chromosome 21.</title>
        <authorList>
            <person name="Rogers M.A."/>
            <person name="Langbein L."/>
            <person name="Winter H."/>
            <person name="Beckmann I."/>
            <person name="Praetzel S."/>
            <person name="Schweizer J."/>
        </authorList>
    </citation>
    <scope>TISSUE SPECIFICITY</scope>
</reference>
<comment type="function">
    <text>In the hair cortex, hair keratin intermediate filaments are embedded in an interfilamentous matrix, consisting of hair keratin-associated proteins (KRTAP), which are essential for the formation of a rigid and resistant hair shaft through their extensive disulfide bond cross-linking with abundant cysteine residues of hair keratins. The matrix proteins include the high-sulfur and high-glycine-tyrosine keratins.</text>
</comment>
<comment type="subunit">
    <text>Interacts with hair keratins.</text>
</comment>
<comment type="tissue specificity">
    <text evidence="1 2">Restricted to a narrow region of the hair fiber cuticle, lying approximately 20 cell layers above the apex of the dermal papilla of the hair root; not detected in any other tissues.</text>
</comment>
<comment type="similarity">
    <text evidence="3">Belongs to the KRTAP type 10 family.</text>
</comment>
<dbReference type="EMBL" id="AB076364">
    <property type="protein sequence ID" value="BAD01551.1"/>
    <property type="molecule type" value="mRNA"/>
</dbReference>
<dbReference type="EMBL" id="AL773604">
    <property type="status" value="NOT_ANNOTATED_CDS"/>
    <property type="molecule type" value="Genomic_DNA"/>
</dbReference>
<dbReference type="EMBL" id="CH471079">
    <property type="protein sequence ID" value="EAX09404.1"/>
    <property type="molecule type" value="Genomic_DNA"/>
</dbReference>
<dbReference type="EMBL" id="BC137339">
    <property type="protein sequence ID" value="AAI37340.1"/>
    <property type="molecule type" value="mRNA"/>
</dbReference>
<dbReference type="EMBL" id="BC137341">
    <property type="protein sequence ID" value="AAI37342.1"/>
    <property type="molecule type" value="mRNA"/>
</dbReference>
<dbReference type="CCDS" id="CCDS42967.1"/>
<dbReference type="RefSeq" id="NP_941972.1">
    <property type="nucleotide sequence ID" value="NM_198699.1"/>
</dbReference>
<dbReference type="FunCoup" id="P60413">
    <property type="interactions" value="8"/>
</dbReference>
<dbReference type="STRING" id="9606.ENSP00000383216"/>
<dbReference type="BioMuta" id="KRTAP10-12"/>
<dbReference type="DMDM" id="42558957"/>
<dbReference type="MassIVE" id="P60413"/>
<dbReference type="PaxDb" id="9606-ENSP00000383216"/>
<dbReference type="PeptideAtlas" id="P60413"/>
<dbReference type="ProteomicsDB" id="57207"/>
<dbReference type="DNASU" id="386685"/>
<dbReference type="Ensembl" id="ENST00000400365.3">
    <property type="protein sequence ID" value="ENSP00000383216.3"/>
    <property type="gene ID" value="ENSG00000189169.8"/>
</dbReference>
<dbReference type="GeneID" id="386685"/>
<dbReference type="KEGG" id="hsa:386685"/>
<dbReference type="MANE-Select" id="ENST00000400365.3">
    <property type="protein sequence ID" value="ENSP00000383216.3"/>
    <property type="RefSeq nucleotide sequence ID" value="NM_198699.1"/>
    <property type="RefSeq protein sequence ID" value="NP_941972.1"/>
</dbReference>
<dbReference type="UCSC" id="uc002zfw.1">
    <property type="organism name" value="human"/>
</dbReference>
<dbReference type="AGR" id="HGNC:20533"/>
<dbReference type="CTD" id="386685"/>
<dbReference type="GeneCards" id="KRTAP10-12"/>
<dbReference type="HGNC" id="HGNC:20533">
    <property type="gene designation" value="KRTAP10-12"/>
</dbReference>
<dbReference type="HPA" id="ENSG00000189169">
    <property type="expression patterns" value="Tissue enriched (skin)"/>
</dbReference>
<dbReference type="neXtProt" id="NX_P60413"/>
<dbReference type="PharmGKB" id="PA134977717"/>
<dbReference type="VEuPathDB" id="HostDB:ENSG00000189169"/>
<dbReference type="eggNOG" id="KOG4726">
    <property type="taxonomic scope" value="Eukaryota"/>
</dbReference>
<dbReference type="GeneTree" id="ENSGT00940000163258"/>
<dbReference type="HOGENOM" id="CLU_062832_0_0_1"/>
<dbReference type="InParanoid" id="P60413"/>
<dbReference type="OMA" id="PACCILT"/>
<dbReference type="PAN-GO" id="P60413">
    <property type="GO annotations" value="0 GO annotations based on evolutionary models"/>
</dbReference>
<dbReference type="TreeFam" id="TF351356"/>
<dbReference type="PathwayCommons" id="P60413"/>
<dbReference type="Reactome" id="R-HSA-6805567">
    <property type="pathway name" value="Keratinization"/>
</dbReference>
<dbReference type="BioGRID-ORCS" id="386685">
    <property type="hits" value="21 hits in 1065 CRISPR screens"/>
</dbReference>
<dbReference type="GenomeRNAi" id="386685"/>
<dbReference type="Pharos" id="P60413">
    <property type="development level" value="Tdark"/>
</dbReference>
<dbReference type="PRO" id="PR:P60413"/>
<dbReference type="Proteomes" id="UP000005640">
    <property type="component" value="Chromosome 21"/>
</dbReference>
<dbReference type="RNAct" id="P60413">
    <property type="molecule type" value="protein"/>
</dbReference>
<dbReference type="Bgee" id="ENSG00000189169">
    <property type="expression patterns" value="Expressed in male germ line stem cell (sensu Vertebrata) in testis and 21 other cell types or tissues"/>
</dbReference>
<dbReference type="ExpressionAtlas" id="P60413">
    <property type="expression patterns" value="baseline and differential"/>
</dbReference>
<dbReference type="GO" id="GO:0005829">
    <property type="term" value="C:cytosol"/>
    <property type="evidence" value="ECO:0000304"/>
    <property type="project" value="Reactome"/>
</dbReference>
<dbReference type="GO" id="GO:0045095">
    <property type="term" value="C:keratin filament"/>
    <property type="evidence" value="ECO:0007669"/>
    <property type="project" value="InterPro"/>
</dbReference>
<dbReference type="InterPro" id="IPR002494">
    <property type="entry name" value="KAP"/>
</dbReference>
<dbReference type="Pfam" id="PF13885">
    <property type="entry name" value="Keratin_B2_2"/>
    <property type="match status" value="3"/>
</dbReference>